<feature type="chain" id="PRO_1000025063" description="UDP-2,3-diacylglucosamine hydrolase">
    <location>
        <begin position="1"/>
        <end position="240"/>
    </location>
</feature>
<feature type="binding site" evidence="1">
    <location>
        <position position="9"/>
    </location>
    <ligand>
        <name>Mn(2+)</name>
        <dbReference type="ChEBI" id="CHEBI:29035"/>
        <label>1</label>
    </ligand>
</feature>
<feature type="binding site" evidence="1">
    <location>
        <position position="11"/>
    </location>
    <ligand>
        <name>Mn(2+)</name>
        <dbReference type="ChEBI" id="CHEBI:29035"/>
        <label>1</label>
    </ligand>
</feature>
<feature type="binding site" evidence="1">
    <location>
        <position position="43"/>
    </location>
    <ligand>
        <name>Mn(2+)</name>
        <dbReference type="ChEBI" id="CHEBI:29035"/>
        <label>1</label>
    </ligand>
</feature>
<feature type="binding site" evidence="1">
    <location>
        <position position="43"/>
    </location>
    <ligand>
        <name>Mn(2+)</name>
        <dbReference type="ChEBI" id="CHEBI:29035"/>
        <label>2</label>
    </ligand>
</feature>
<feature type="binding site" evidence="1">
    <location>
        <begin position="81"/>
        <end position="82"/>
    </location>
    <ligand>
        <name>substrate</name>
    </ligand>
</feature>
<feature type="binding site" evidence="1">
    <location>
        <position position="81"/>
    </location>
    <ligand>
        <name>Mn(2+)</name>
        <dbReference type="ChEBI" id="CHEBI:29035"/>
        <label>2</label>
    </ligand>
</feature>
<feature type="binding site" evidence="1">
    <location>
        <position position="116"/>
    </location>
    <ligand>
        <name>Mn(2+)</name>
        <dbReference type="ChEBI" id="CHEBI:29035"/>
        <label>2</label>
    </ligand>
</feature>
<feature type="binding site" evidence="1">
    <location>
        <position position="124"/>
    </location>
    <ligand>
        <name>substrate</name>
    </ligand>
</feature>
<feature type="binding site" evidence="1">
    <location>
        <position position="162"/>
    </location>
    <ligand>
        <name>substrate</name>
    </ligand>
</feature>
<feature type="binding site" evidence="1">
    <location>
        <position position="166"/>
    </location>
    <ligand>
        <name>substrate</name>
    </ligand>
</feature>
<feature type="binding site" evidence="1">
    <location>
        <position position="169"/>
    </location>
    <ligand>
        <name>substrate</name>
    </ligand>
</feature>
<feature type="binding site" evidence="1">
    <location>
        <position position="197"/>
    </location>
    <ligand>
        <name>Mn(2+)</name>
        <dbReference type="ChEBI" id="CHEBI:29035"/>
        <label>2</label>
    </ligand>
</feature>
<feature type="binding site" evidence="1">
    <location>
        <position position="197"/>
    </location>
    <ligand>
        <name>substrate</name>
    </ligand>
</feature>
<feature type="binding site" evidence="1">
    <location>
        <position position="199"/>
    </location>
    <ligand>
        <name>Mn(2+)</name>
        <dbReference type="ChEBI" id="CHEBI:29035"/>
        <label>1</label>
    </ligand>
</feature>
<keyword id="KW-0997">Cell inner membrane</keyword>
<keyword id="KW-1003">Cell membrane</keyword>
<keyword id="KW-0378">Hydrolase</keyword>
<keyword id="KW-0441">Lipid A biosynthesis</keyword>
<keyword id="KW-0444">Lipid biosynthesis</keyword>
<keyword id="KW-0443">Lipid metabolism</keyword>
<keyword id="KW-0464">Manganese</keyword>
<keyword id="KW-0472">Membrane</keyword>
<keyword id="KW-0479">Metal-binding</keyword>
<keyword id="KW-1185">Reference proteome</keyword>
<protein>
    <recommendedName>
        <fullName evidence="1">UDP-2,3-diacylglucosamine hydrolase</fullName>
        <ecNumber evidence="1">3.6.1.54</ecNumber>
    </recommendedName>
    <alternativeName>
        <fullName evidence="1">UDP-2,3-diacylglucosamine diphosphatase</fullName>
    </alternativeName>
</protein>
<accession>Q5F6U7</accession>
<evidence type="ECO:0000255" key="1">
    <source>
        <dbReference type="HAMAP-Rule" id="MF_00575"/>
    </source>
</evidence>
<comment type="function">
    <text evidence="1">Hydrolyzes the pyrophosphate bond of UDP-2,3-diacylglucosamine to yield 2,3-diacylglucosamine 1-phosphate (lipid X) and UMP by catalyzing the attack of water at the alpha-P atom. Involved in the biosynthesis of lipid A, a phosphorylated glycolipid that anchors the lipopolysaccharide to the outer membrane of the cell.</text>
</comment>
<comment type="catalytic activity">
    <reaction evidence="1">
        <text>UDP-2-N,3-O-bis[(3R)-3-hydroxytetradecanoyl]-alpha-D-glucosamine + H2O = 2-N,3-O-bis[(3R)-3-hydroxytetradecanoyl]-alpha-D-glucosaminyl 1-phosphate + UMP + 2 H(+)</text>
        <dbReference type="Rhea" id="RHEA:25213"/>
        <dbReference type="ChEBI" id="CHEBI:15377"/>
        <dbReference type="ChEBI" id="CHEBI:15378"/>
        <dbReference type="ChEBI" id="CHEBI:57865"/>
        <dbReference type="ChEBI" id="CHEBI:57957"/>
        <dbReference type="ChEBI" id="CHEBI:78847"/>
        <dbReference type="EC" id="3.6.1.54"/>
    </reaction>
</comment>
<comment type="cofactor">
    <cofactor evidence="1">
        <name>Mn(2+)</name>
        <dbReference type="ChEBI" id="CHEBI:29035"/>
    </cofactor>
    <text evidence="1">Binds 2 Mn(2+) ions per subunit in a binuclear metal center.</text>
</comment>
<comment type="pathway">
    <text evidence="1">Glycolipid biosynthesis; lipid IV(A) biosynthesis; lipid IV(A) from (3R)-3-hydroxytetradecanoyl-[acyl-carrier-protein] and UDP-N-acetyl-alpha-D-glucosamine: step 4/6.</text>
</comment>
<comment type="subcellular location">
    <subcellularLocation>
        <location evidence="1">Cell inner membrane</location>
        <topology evidence="1">Peripheral membrane protein</topology>
        <orientation evidence="1">Cytoplasmic side</orientation>
    </subcellularLocation>
</comment>
<comment type="similarity">
    <text evidence="1">Belongs to the LpxH family.</text>
</comment>
<reference key="1">
    <citation type="submission" date="2003-03" db="EMBL/GenBank/DDBJ databases">
        <title>The complete genome sequence of Neisseria gonorrhoeae.</title>
        <authorList>
            <person name="Lewis L.A."/>
            <person name="Gillaspy A.F."/>
            <person name="McLaughlin R.E."/>
            <person name="Gipson M."/>
            <person name="Ducey T.F."/>
            <person name="Ownbey T."/>
            <person name="Hartman K."/>
            <person name="Nydick C."/>
            <person name="Carson M.B."/>
            <person name="Vaughn J."/>
            <person name="Thomson C."/>
            <person name="Song L."/>
            <person name="Lin S."/>
            <person name="Yuan X."/>
            <person name="Najar F."/>
            <person name="Zhan M."/>
            <person name="Ren Q."/>
            <person name="Zhu H."/>
            <person name="Qi S."/>
            <person name="Kenton S.M."/>
            <person name="Lai H."/>
            <person name="White J.D."/>
            <person name="Clifton S."/>
            <person name="Roe B.A."/>
            <person name="Dyer D.W."/>
        </authorList>
    </citation>
    <scope>NUCLEOTIDE SEQUENCE [LARGE SCALE GENOMIC DNA]</scope>
    <source>
        <strain>ATCC 700825 / FA 1090</strain>
    </source>
</reference>
<name>LPXH_NEIG1</name>
<organism>
    <name type="scientific">Neisseria gonorrhoeae (strain ATCC 700825 / FA 1090)</name>
    <dbReference type="NCBI Taxonomy" id="242231"/>
    <lineage>
        <taxon>Bacteria</taxon>
        <taxon>Pseudomonadati</taxon>
        <taxon>Pseudomonadota</taxon>
        <taxon>Betaproteobacteria</taxon>
        <taxon>Neisseriales</taxon>
        <taxon>Neisseriaceae</taxon>
        <taxon>Neisseria</taxon>
    </lineage>
</organism>
<dbReference type="EC" id="3.6.1.54" evidence="1"/>
<dbReference type="EMBL" id="AE004969">
    <property type="protein sequence ID" value="AAW90090.1"/>
    <property type="molecule type" value="Genomic_DNA"/>
</dbReference>
<dbReference type="RefSeq" id="WP_003689323.1">
    <property type="nucleotide sequence ID" value="NC_002946.2"/>
</dbReference>
<dbReference type="RefSeq" id="YP_208502.1">
    <property type="nucleotide sequence ID" value="NC_002946.2"/>
</dbReference>
<dbReference type="SMR" id="Q5F6U7"/>
<dbReference type="STRING" id="242231.NGO_1448"/>
<dbReference type="GeneID" id="66753657"/>
<dbReference type="KEGG" id="ngo:NGO_1448"/>
<dbReference type="PATRIC" id="fig|242231.10.peg.1705"/>
<dbReference type="HOGENOM" id="CLU_074586_0_0_4"/>
<dbReference type="UniPathway" id="UPA00359">
    <property type="reaction ID" value="UER00480"/>
</dbReference>
<dbReference type="Proteomes" id="UP000000535">
    <property type="component" value="Chromosome"/>
</dbReference>
<dbReference type="GO" id="GO:0005737">
    <property type="term" value="C:cytoplasm"/>
    <property type="evidence" value="ECO:0007669"/>
    <property type="project" value="InterPro"/>
</dbReference>
<dbReference type="GO" id="GO:0019897">
    <property type="term" value="C:extrinsic component of plasma membrane"/>
    <property type="evidence" value="ECO:0007669"/>
    <property type="project" value="UniProtKB-UniRule"/>
</dbReference>
<dbReference type="GO" id="GO:0030145">
    <property type="term" value="F:manganese ion binding"/>
    <property type="evidence" value="ECO:0007669"/>
    <property type="project" value="UniProtKB-UniRule"/>
</dbReference>
<dbReference type="GO" id="GO:0008758">
    <property type="term" value="F:UDP-2,3-diacylglucosamine hydrolase activity"/>
    <property type="evidence" value="ECO:0007669"/>
    <property type="project" value="UniProtKB-UniRule"/>
</dbReference>
<dbReference type="GO" id="GO:0009245">
    <property type="term" value="P:lipid A biosynthetic process"/>
    <property type="evidence" value="ECO:0007669"/>
    <property type="project" value="UniProtKB-UniRule"/>
</dbReference>
<dbReference type="CDD" id="cd07398">
    <property type="entry name" value="MPP_YbbF-LpxH"/>
    <property type="match status" value="1"/>
</dbReference>
<dbReference type="Gene3D" id="3.60.21.10">
    <property type="match status" value="1"/>
</dbReference>
<dbReference type="HAMAP" id="MF_00575">
    <property type="entry name" value="LpxH"/>
    <property type="match status" value="1"/>
</dbReference>
<dbReference type="InterPro" id="IPR004843">
    <property type="entry name" value="Calcineurin-like_PHP_ApaH"/>
</dbReference>
<dbReference type="InterPro" id="IPR043461">
    <property type="entry name" value="LpxH-like"/>
</dbReference>
<dbReference type="InterPro" id="IPR029052">
    <property type="entry name" value="Metallo-depent_PP-like"/>
</dbReference>
<dbReference type="InterPro" id="IPR010138">
    <property type="entry name" value="UDP-diacylglucosamine_Hdrlase"/>
</dbReference>
<dbReference type="NCBIfam" id="TIGR01854">
    <property type="entry name" value="lipid_A_lpxH"/>
    <property type="match status" value="1"/>
</dbReference>
<dbReference type="NCBIfam" id="NF003743">
    <property type="entry name" value="PRK05340.1"/>
    <property type="match status" value="1"/>
</dbReference>
<dbReference type="PANTHER" id="PTHR34990:SF1">
    <property type="entry name" value="UDP-2,3-DIACYLGLUCOSAMINE HYDROLASE"/>
    <property type="match status" value="1"/>
</dbReference>
<dbReference type="PANTHER" id="PTHR34990">
    <property type="entry name" value="UDP-2,3-DIACYLGLUCOSAMINE HYDROLASE-RELATED"/>
    <property type="match status" value="1"/>
</dbReference>
<dbReference type="Pfam" id="PF00149">
    <property type="entry name" value="Metallophos"/>
    <property type="match status" value="1"/>
</dbReference>
<dbReference type="SUPFAM" id="SSF56300">
    <property type="entry name" value="Metallo-dependent phosphatases"/>
    <property type="match status" value="1"/>
</dbReference>
<sequence>MRPSYFISDLHLSEKHPELTELLLRFLRSAAAGQARAVYILGDLFDFWVGDDEVSELNTSVAREIRKLSDKGVAVFFVRGNRDFLIGRDFCRQAGMTLLPDYSVLDLFGSNTLICHGDTLCTDDKAYLRFRRIVHCRRLQKLFLMLPLKWRTRLAAKIRRVSKMEKQVKPADIMDVNAAFTARQVRAFNAERLIHGHTHREHIHHENGFTRIVLGDWHNDYASILRVDGDGAVFVPPEEC</sequence>
<gene>
    <name evidence="1" type="primary">lpxH</name>
    <name type="ordered locus">NGO_1448</name>
</gene>
<proteinExistence type="inferred from homology"/>